<gene>
    <name evidence="1" type="primary">uppP</name>
    <name type="synonym">bacA</name>
    <name type="synonym">upk</name>
    <name type="ordered locus">Rv2136c</name>
    <name type="ORF">MTCY270.32</name>
</gene>
<sequence length="282" mass="30276">MTAAPAMSWWQVIVLAAAQGLTEFLPVSSSGHLAIVSRIFFSGDAGASFTAVSQLGTEAAVVIYFARDIVRILSAWLHGLVVKAHRNTDYRLGWYVIIGTIPICILGLFFKDDIRSGVRNLWVVVTALVVFSGVIALAEYVGRQSRHIERLTWRDAVVVGIAQTLALVPGVSRSGSTISAGLFLGLDRELAARFGFLLAIPAVFASGLFSLPDAFHPVTEGMSATGPQLLVATLIAFVLGLTAVAWLLRFLVRHNMYWFVGYRVLVGTGMLVLLATGTVAAT</sequence>
<keyword id="KW-0046">Antibiotic resistance</keyword>
<keyword id="KW-1003">Cell membrane</keyword>
<keyword id="KW-0133">Cell shape</keyword>
<keyword id="KW-0961">Cell wall biogenesis/degradation</keyword>
<keyword id="KW-0378">Hydrolase</keyword>
<keyword id="KW-0472">Membrane</keyword>
<keyword id="KW-0573">Peptidoglycan synthesis</keyword>
<keyword id="KW-1185">Reference proteome</keyword>
<keyword id="KW-0812">Transmembrane</keyword>
<keyword id="KW-1133">Transmembrane helix</keyword>
<accession>P9WFF9</accession>
<accession>L0TBM1</accession>
<accession>O06239</accession>
<dbReference type="EC" id="3.6.1.27" evidence="1"/>
<dbReference type="EMBL" id="AL123456">
    <property type="protein sequence ID" value="CCP44911.1"/>
    <property type="status" value="ALT_INIT"/>
    <property type="molecule type" value="Genomic_DNA"/>
</dbReference>
<dbReference type="PIR" id="D70577">
    <property type="entry name" value="D70577"/>
</dbReference>
<dbReference type="RefSeq" id="NP_216652.1">
    <property type="nucleotide sequence ID" value="NC_000962.3"/>
</dbReference>
<dbReference type="SMR" id="P9WFF9"/>
<dbReference type="FunCoup" id="P9WFF9">
    <property type="interactions" value="7"/>
</dbReference>
<dbReference type="STRING" id="83332.Rv2136c"/>
<dbReference type="PaxDb" id="83332-Rv2136c"/>
<dbReference type="DNASU" id="887612"/>
<dbReference type="GeneID" id="887612"/>
<dbReference type="KEGG" id="mtu:Rv2136c"/>
<dbReference type="TubercuList" id="Rv2136c"/>
<dbReference type="eggNOG" id="COG1968">
    <property type="taxonomic scope" value="Bacteria"/>
</dbReference>
<dbReference type="InParanoid" id="P9WFF9"/>
<dbReference type="OrthoDB" id="9808289at2"/>
<dbReference type="BioCyc" id="MetaCyc:G185E-6342-MONOMER"/>
<dbReference type="Proteomes" id="UP000001584">
    <property type="component" value="Chromosome"/>
</dbReference>
<dbReference type="GO" id="GO:0005886">
    <property type="term" value="C:plasma membrane"/>
    <property type="evidence" value="ECO:0000318"/>
    <property type="project" value="GO_Central"/>
</dbReference>
<dbReference type="GO" id="GO:0050380">
    <property type="term" value="F:undecaprenyl-diphosphatase activity"/>
    <property type="evidence" value="ECO:0000318"/>
    <property type="project" value="GO_Central"/>
</dbReference>
<dbReference type="GO" id="GO:0071555">
    <property type="term" value="P:cell wall organization"/>
    <property type="evidence" value="ECO:0007669"/>
    <property type="project" value="UniProtKB-KW"/>
</dbReference>
<dbReference type="GO" id="GO:0009252">
    <property type="term" value="P:peptidoglycan biosynthetic process"/>
    <property type="evidence" value="ECO:0007669"/>
    <property type="project" value="UniProtKB-KW"/>
</dbReference>
<dbReference type="GO" id="GO:0000270">
    <property type="term" value="P:peptidoglycan metabolic process"/>
    <property type="evidence" value="ECO:0000318"/>
    <property type="project" value="GO_Central"/>
</dbReference>
<dbReference type="GO" id="GO:0008360">
    <property type="term" value="P:regulation of cell shape"/>
    <property type="evidence" value="ECO:0007669"/>
    <property type="project" value="UniProtKB-KW"/>
</dbReference>
<dbReference type="GO" id="GO:0046677">
    <property type="term" value="P:response to antibiotic"/>
    <property type="evidence" value="ECO:0007669"/>
    <property type="project" value="UniProtKB-UniRule"/>
</dbReference>
<dbReference type="GO" id="GO:0051409">
    <property type="term" value="P:response to nitrosative stress"/>
    <property type="evidence" value="ECO:0000315"/>
    <property type="project" value="MTBBASE"/>
</dbReference>
<dbReference type="HAMAP" id="MF_01006">
    <property type="entry name" value="Undec_diphosphatase"/>
    <property type="match status" value="1"/>
</dbReference>
<dbReference type="InterPro" id="IPR003824">
    <property type="entry name" value="UppP"/>
</dbReference>
<dbReference type="NCBIfam" id="NF001392">
    <property type="entry name" value="PRK00281.2-1"/>
    <property type="match status" value="1"/>
</dbReference>
<dbReference type="NCBIfam" id="TIGR00753">
    <property type="entry name" value="undec_PP_bacA"/>
    <property type="match status" value="1"/>
</dbReference>
<dbReference type="PANTHER" id="PTHR30622">
    <property type="entry name" value="UNDECAPRENYL-DIPHOSPHATASE"/>
    <property type="match status" value="1"/>
</dbReference>
<dbReference type="PANTHER" id="PTHR30622:SF4">
    <property type="entry name" value="UNDECAPRENYL-DIPHOSPHATASE"/>
    <property type="match status" value="1"/>
</dbReference>
<dbReference type="Pfam" id="PF02673">
    <property type="entry name" value="BacA"/>
    <property type="match status" value="1"/>
</dbReference>
<protein>
    <recommendedName>
        <fullName evidence="1">Undecaprenyl-diphosphatase</fullName>
        <ecNumber evidence="1">3.6.1.27</ecNumber>
    </recommendedName>
    <alternativeName>
        <fullName evidence="1">Bacitracin resistance protein</fullName>
    </alternativeName>
    <alternativeName>
        <fullName evidence="1">Undecaprenyl pyrophosphate phosphatase</fullName>
    </alternativeName>
</protein>
<evidence type="ECO:0000255" key="1">
    <source>
        <dbReference type="HAMAP-Rule" id="MF_01006"/>
    </source>
</evidence>
<evidence type="ECO:0000305" key="2"/>
<organism>
    <name type="scientific">Mycobacterium tuberculosis (strain ATCC 25618 / H37Rv)</name>
    <dbReference type="NCBI Taxonomy" id="83332"/>
    <lineage>
        <taxon>Bacteria</taxon>
        <taxon>Bacillati</taxon>
        <taxon>Actinomycetota</taxon>
        <taxon>Actinomycetes</taxon>
        <taxon>Mycobacteriales</taxon>
        <taxon>Mycobacteriaceae</taxon>
        <taxon>Mycobacterium</taxon>
        <taxon>Mycobacterium tuberculosis complex</taxon>
    </lineage>
</organism>
<comment type="function">
    <text evidence="1">Catalyzes the dephosphorylation of undecaprenyl diphosphate (UPP). Confers resistance to bacitracin.</text>
</comment>
<comment type="catalytic activity">
    <reaction evidence="1">
        <text>di-trans,octa-cis-undecaprenyl diphosphate + H2O = di-trans,octa-cis-undecaprenyl phosphate + phosphate + H(+)</text>
        <dbReference type="Rhea" id="RHEA:28094"/>
        <dbReference type="ChEBI" id="CHEBI:15377"/>
        <dbReference type="ChEBI" id="CHEBI:15378"/>
        <dbReference type="ChEBI" id="CHEBI:43474"/>
        <dbReference type="ChEBI" id="CHEBI:58405"/>
        <dbReference type="ChEBI" id="CHEBI:60392"/>
        <dbReference type="EC" id="3.6.1.27"/>
    </reaction>
</comment>
<comment type="subcellular location">
    <subcellularLocation>
        <location evidence="1">Cell membrane</location>
        <topology evidence="1">Multi-pass membrane protein</topology>
    </subcellularLocation>
</comment>
<comment type="miscellaneous">
    <text>Bacitracin is thought to be involved in the inhibition of peptidoglycan synthesis by sequestering undecaprenyl diphosphate, thereby reducing the pool of lipid carrier available.</text>
</comment>
<comment type="miscellaneous">
    <text>Was identified as a high-confidence drug target.</text>
</comment>
<comment type="similarity">
    <text evidence="1">Belongs to the UppP family.</text>
</comment>
<comment type="sequence caution" evidence="2">
    <conflict type="erroneous initiation">
        <sequence resource="EMBL-CDS" id="CCP44911"/>
    </conflict>
    <text>Truncated N-terminus.</text>
</comment>
<feature type="chain" id="PRO_0000151166" description="Undecaprenyl-diphosphatase">
    <location>
        <begin position="1"/>
        <end position="282"/>
    </location>
</feature>
<feature type="transmembrane region" description="Helical" evidence="1">
    <location>
        <begin position="90"/>
        <end position="110"/>
    </location>
</feature>
<feature type="transmembrane region" description="Helical" evidence="1">
    <location>
        <begin position="121"/>
        <end position="141"/>
    </location>
</feature>
<feature type="transmembrane region" description="Helical" evidence="1">
    <location>
        <begin position="194"/>
        <end position="214"/>
    </location>
</feature>
<feature type="transmembrane region" description="Helical" evidence="1">
    <location>
        <begin position="228"/>
        <end position="248"/>
    </location>
</feature>
<feature type="transmembrane region" description="Helical" evidence="1">
    <location>
        <begin position="256"/>
        <end position="276"/>
    </location>
</feature>
<name>UPPP_MYCTU</name>
<proteinExistence type="evidence at protein level"/>
<reference key="1">
    <citation type="journal article" date="1998" name="Nature">
        <title>Deciphering the biology of Mycobacterium tuberculosis from the complete genome sequence.</title>
        <authorList>
            <person name="Cole S.T."/>
            <person name="Brosch R."/>
            <person name="Parkhill J."/>
            <person name="Garnier T."/>
            <person name="Churcher C.M."/>
            <person name="Harris D.E."/>
            <person name="Gordon S.V."/>
            <person name="Eiglmeier K."/>
            <person name="Gas S."/>
            <person name="Barry C.E. III"/>
            <person name="Tekaia F."/>
            <person name="Badcock K."/>
            <person name="Basham D."/>
            <person name="Brown D."/>
            <person name="Chillingworth T."/>
            <person name="Connor R."/>
            <person name="Davies R.M."/>
            <person name="Devlin K."/>
            <person name="Feltwell T."/>
            <person name="Gentles S."/>
            <person name="Hamlin N."/>
            <person name="Holroyd S."/>
            <person name="Hornsby T."/>
            <person name="Jagels K."/>
            <person name="Krogh A."/>
            <person name="McLean J."/>
            <person name="Moule S."/>
            <person name="Murphy L.D."/>
            <person name="Oliver S."/>
            <person name="Osborne J."/>
            <person name="Quail M.A."/>
            <person name="Rajandream M.A."/>
            <person name="Rogers J."/>
            <person name="Rutter S."/>
            <person name="Seeger K."/>
            <person name="Skelton S."/>
            <person name="Squares S."/>
            <person name="Squares R."/>
            <person name="Sulston J.E."/>
            <person name="Taylor K."/>
            <person name="Whitehead S."/>
            <person name="Barrell B.G."/>
        </authorList>
    </citation>
    <scope>NUCLEOTIDE SEQUENCE [LARGE SCALE GENOMIC DNA]</scope>
    <source>
        <strain>ATCC 25618 / H37Rv</strain>
    </source>
</reference>
<reference key="2">
    <citation type="journal article" date="2008" name="BMC Syst. Biol.">
        <title>targetTB: a target identification pipeline for Mycobacterium tuberculosis through an interactome, reactome and genome-scale structural analysis.</title>
        <authorList>
            <person name="Raman K."/>
            <person name="Yeturu K."/>
            <person name="Chandra N."/>
        </authorList>
    </citation>
    <scope>IDENTIFICATION AS A DRUG TARGET [LARGE SCALE ANALYSIS]</scope>
</reference>
<reference key="3">
    <citation type="journal article" date="2011" name="Mol. Cell. Proteomics">
        <title>Proteogenomic analysis of Mycobacterium tuberculosis by high resolution mass spectrometry.</title>
        <authorList>
            <person name="Kelkar D.S."/>
            <person name="Kumar D."/>
            <person name="Kumar P."/>
            <person name="Balakrishnan L."/>
            <person name="Muthusamy B."/>
            <person name="Yadav A.K."/>
            <person name="Shrivastava P."/>
            <person name="Marimuthu A."/>
            <person name="Anand S."/>
            <person name="Sundaram H."/>
            <person name="Kingsbury R."/>
            <person name="Harsha H.C."/>
            <person name="Nair B."/>
            <person name="Prasad T.S."/>
            <person name="Chauhan D.S."/>
            <person name="Katoch K."/>
            <person name="Katoch V.M."/>
            <person name="Kumar P."/>
            <person name="Chaerkady R."/>
            <person name="Ramachandran S."/>
            <person name="Dash D."/>
            <person name="Pandey A."/>
        </authorList>
    </citation>
    <scope>IDENTIFICATION BY MASS SPECTROMETRY [LARGE SCALE ANALYSIS]</scope>
    <source>
        <strain>ATCC 25618 / H37Rv</strain>
    </source>
</reference>